<feature type="chain" id="PRO_0000413985" description="Secreted effector protein EspF(U)">
    <location>
        <begin position="1"/>
        <end position="337"/>
    </location>
</feature>
<feature type="repeat" description="1">
    <location>
        <begin position="96"/>
        <end position="142"/>
    </location>
</feature>
<feature type="repeat" description="2">
    <location>
        <begin position="143"/>
        <end position="189"/>
    </location>
</feature>
<feature type="repeat" description="3">
    <location>
        <begin position="190"/>
        <end position="236"/>
    </location>
</feature>
<feature type="repeat" description="4">
    <location>
        <begin position="237"/>
        <end position="283"/>
    </location>
</feature>
<feature type="repeat" description="5">
    <location>
        <begin position="284"/>
        <end position="330"/>
    </location>
</feature>
<feature type="region of interest" description="5 X 48 AA approximate tandem repeats">
    <location>
        <begin position="96"/>
        <end position="330"/>
    </location>
</feature>
<feature type="region of interest" description="Disordered" evidence="2">
    <location>
        <begin position="291"/>
        <end position="312"/>
    </location>
</feature>
<feature type="compositionally biased region" description="Pro residues" evidence="2">
    <location>
        <begin position="295"/>
        <end position="306"/>
    </location>
</feature>
<feature type="helix" evidence="7">
    <location>
        <begin position="269"/>
        <end position="279"/>
    </location>
</feature>
<feature type="turn" evidence="7">
    <location>
        <begin position="280"/>
        <end position="283"/>
    </location>
</feature>
<feature type="helix" evidence="7">
    <location>
        <begin position="287"/>
        <end position="289"/>
    </location>
</feature>
<protein>
    <recommendedName>
        <fullName>Secreted effector protein EspF(U)</fullName>
    </recommendedName>
    <alternativeName>
        <fullName>EspF-like protein encoded on prophage U</fullName>
    </alternativeName>
    <alternativeName>
        <fullName>Tir-cytoskeleton coupling protein TccP</fullName>
    </alternativeName>
</protein>
<comment type="function">
    <text evidence="3 5">Required for efficient pedestal formation in host epithelial cells during infection. Acts as an intermediate between Tir (via host BAIAP2) and host WASL/N-WASP. Directly binds and activates WASL/N-WASP, which stimulates actin polymerization and leads to the formation of actin pedestals at the sites of bacterial adhesion.</text>
</comment>
<comment type="subunit">
    <text evidence="1 3 4 5">Interacts with host BAIAP2 and host WASL/N-WASP (By similarity). Can also interact with host proteins BAIAP2L1 and WAS/WASP. Identified in a complex with host proteins BAIAP2L1 and WASL.</text>
</comment>
<comment type="subcellular location">
    <subcellularLocation>
        <location evidence="1">Secreted</location>
    </subcellularLocation>
    <subcellularLocation>
        <location evidence="1">Host cytoplasm</location>
    </subcellularLocation>
    <text evidence="1">Secreted via the type III secretion system (T3SS). In host cells, localizes to the tip of the actin pedestal (By similarity).</text>
</comment>
<comment type="domain">
    <text evidence="1 3">The N-terminal 21 amino acids are necessary and sufficient for translocation into the host cell (By similarity). The C-terminal region, composed of several highly conserved proline-rich repeats, interacts with the SH3 domain of BAIAP2 and BAIAP2L1, and the GTPase binding domain (GBD) of WASL/N-WASP and WAS/WASP. The N-terminal translocation signal and two proline-rich repeats are sufficient for triggering actin polymerization, but each additional repeat gives higher activity.</text>
</comment>
<comment type="similarity">
    <text evidence="6">Belongs to the EspF(U)/TccP family.</text>
</comment>
<keyword id="KW-0002">3D-structure</keyword>
<keyword id="KW-1035">Host cytoplasm</keyword>
<keyword id="KW-0677">Repeat</keyword>
<keyword id="KW-0964">Secreted</keyword>
<keyword id="KW-0843">Virulence</keyword>
<gene>
    <name type="primary">espF(U)</name>
    <name type="synonym">tccP</name>
</gene>
<dbReference type="EMBL" id="AB253537">
    <property type="protein sequence ID" value="BAF45424.1"/>
    <property type="molecule type" value="Genomic_DNA"/>
</dbReference>
<dbReference type="EMBL" id="AB253538">
    <property type="protein sequence ID" value="BAF45425.1"/>
    <property type="molecule type" value="Genomic_DNA"/>
</dbReference>
<dbReference type="EMBL" id="AB253539">
    <property type="protein sequence ID" value="BAF45426.1"/>
    <property type="molecule type" value="Genomic_DNA"/>
</dbReference>
<dbReference type="EMBL" id="AB253540">
    <property type="protein sequence ID" value="BAF45427.1"/>
    <property type="molecule type" value="Genomic_DNA"/>
</dbReference>
<dbReference type="EMBL" id="AB253541">
    <property type="protein sequence ID" value="BAF45428.1"/>
    <property type="molecule type" value="Genomic_DNA"/>
</dbReference>
<dbReference type="EMBL" id="AB253542">
    <property type="protein sequence ID" value="BAF45429.1"/>
    <property type="molecule type" value="Genomic_DNA"/>
</dbReference>
<dbReference type="EMBL" id="AB253544">
    <property type="protein sequence ID" value="BAF45431.1"/>
    <property type="molecule type" value="Genomic_DNA"/>
</dbReference>
<dbReference type="RefSeq" id="WP_010917831.1">
    <property type="nucleotide sequence ID" value="NZ_SWKA01000005.1"/>
</dbReference>
<dbReference type="PDB" id="2K42">
    <property type="method" value="NMR"/>
    <property type="chains" value="B=268-300"/>
</dbReference>
<dbReference type="PDB" id="2KXC">
    <property type="method" value="NMR"/>
    <property type="chains" value="B=268-314"/>
</dbReference>
<dbReference type="PDB" id="2LNH">
    <property type="method" value="NMR"/>
    <property type="chains" value="C=268-314"/>
</dbReference>
<dbReference type="PDBsum" id="2K42"/>
<dbReference type="PDBsum" id="2KXC"/>
<dbReference type="PDBsum" id="2LNH"/>
<dbReference type="SMR" id="P0DJ89"/>
<dbReference type="DIP" id="DIP-59949N"/>
<dbReference type="EvolutionaryTrace" id="P0DJ89"/>
<dbReference type="GO" id="GO:0005576">
    <property type="term" value="C:extracellular region"/>
    <property type="evidence" value="ECO:0007669"/>
    <property type="project" value="UniProtKB-SubCell"/>
</dbReference>
<dbReference type="GO" id="GO:0030430">
    <property type="term" value="C:host cell cytoplasm"/>
    <property type="evidence" value="ECO:0000250"/>
    <property type="project" value="UniProtKB"/>
</dbReference>
<dbReference type="DisProt" id="DP00963"/>
<dbReference type="FunFam" id="6.10.250.3330:FF:000001">
    <property type="entry name" value="Secreted effector protein EspF(U)"/>
    <property type="match status" value="4"/>
</dbReference>
<dbReference type="Gene3D" id="6.10.250.3330">
    <property type="entry name" value="TccP2/EspF(U)-like"/>
    <property type="match status" value="6"/>
</dbReference>
<dbReference type="IDEAL" id="IID90008"/>
<dbReference type="InterPro" id="IPR006891">
    <property type="entry name" value="T3SS_EspF"/>
</dbReference>
<dbReference type="InterPro" id="IPR044889">
    <property type="entry name" value="TccP2/EspF(U)-like_sf"/>
</dbReference>
<dbReference type="Pfam" id="PF04806">
    <property type="entry name" value="EspF"/>
    <property type="match status" value="6"/>
</dbReference>
<reference key="1">
    <citation type="journal article" date="2007" name="Infect. Immun.">
        <title>TccP2 of O157:H7 and non-O157 enterohemorrhagic Escherichia coli (EHEC): challenging the dogma of EHEC-induced actin polymerization.</title>
        <authorList>
            <person name="Ogura Y."/>
            <person name="Ooka T."/>
            <person name="Whale A."/>
            <person name="Garmendia J."/>
            <person name="Beutin L."/>
            <person name="Tennant S."/>
            <person name="Krause G."/>
            <person name="Morabito S."/>
            <person name="Chinen I."/>
            <person name="Tobe T."/>
            <person name="Abe H."/>
            <person name="Tozzoli R."/>
            <person name="Caprioli A."/>
            <person name="Rivas M."/>
            <person name="Robins-Browne R."/>
            <person name="Hayashi T."/>
            <person name="Frankel G."/>
        </authorList>
    </citation>
    <scope>NUCLEOTIDE SEQUENCE [GENOMIC DNA]</scope>
    <source>
        <strain>O157:H7 / 980551</strain>
        <strain>O157:H7 / 980706</strain>
        <strain>O157:H7 / 980938</strain>
        <strain>O157:H7 / 981456</strain>
        <strain>O157:H7 / 981795</strain>
        <strain>O157:H7 / 990281</strain>
        <strain>O157:H7 / 990570</strain>
    </source>
</reference>
<reference key="2">
    <citation type="journal article" date="2008" name="Nature">
        <title>Structural mechanism of WASP activation by the enterohaemorrhagic E. coli effector EspF(U).</title>
        <authorList>
            <person name="Cheng H.C."/>
            <person name="Skehan B.M."/>
            <person name="Campellone K.G."/>
            <person name="Leong J.M."/>
            <person name="Rosen M.K."/>
        </authorList>
    </citation>
    <scope>STRUCTURE BY NMR OF 268-300</scope>
    <scope>FUNCTION</scope>
    <scope>INTERACTION WITH HUMAN WAS/WASP</scope>
    <scope>DOMAIN</scope>
</reference>
<reference key="3">
    <citation type="journal article" date="2010" name="Proc. Natl. Acad. Sci. U.S.A.">
        <title>Recognition of tandem PxxP motifs as a unique Src homology 3-binding mode triggers pathogen-driven actin assembly.</title>
        <authorList>
            <person name="Aitio O."/>
            <person name="Hellman M."/>
            <person name="Kazlauskas A."/>
            <person name="Vingadassalom D.F."/>
            <person name="Leong J.M."/>
            <person name="Saksela K."/>
            <person name="Permi P."/>
        </authorList>
    </citation>
    <scope>STRUCTURE BY NMR OF 268-314</scope>
    <scope>INTERACTION WITH HUMAN BAIAP2L1</scope>
</reference>
<reference key="4">
    <citation type="journal article" date="2012" name="Structure">
        <title>Enterohaemorrhagic Escherichia coli exploits a tryptophan switch to hijack host f-actin assembly.</title>
        <authorList>
            <person name="Aitio O."/>
            <person name="Hellman M."/>
            <person name="Skehan B."/>
            <person name="Kesti T."/>
            <person name="Leong J.M."/>
            <person name="Saksela K."/>
            <person name="Permi P."/>
        </authorList>
    </citation>
    <scope>STRUCTURE BY NMR OF 221-267 IN COMPLEX WITH HOST BAIAP2L1 AND WASL</scope>
    <scope>FUNCTION</scope>
    <scope>INTERACTION WITH HOST BAIAP2L1 AND WASL</scope>
    <scope>IDENTIFICATION IN A COMPLEX WITH HOST BAIAP2L1 AND WASL</scope>
</reference>
<evidence type="ECO:0000250" key="1"/>
<evidence type="ECO:0000256" key="2">
    <source>
        <dbReference type="SAM" id="MobiDB-lite"/>
    </source>
</evidence>
<evidence type="ECO:0000269" key="3">
    <source>
    </source>
</evidence>
<evidence type="ECO:0000269" key="4">
    <source>
    </source>
</evidence>
<evidence type="ECO:0000269" key="5">
    <source>
    </source>
</evidence>
<evidence type="ECO:0000305" key="6"/>
<evidence type="ECO:0007829" key="7">
    <source>
        <dbReference type="PDB" id="2LNH"/>
    </source>
</evidence>
<sequence>MINNVSSLFPTVNRNITAVYKKSSFSVSPQKITLNPVKISSPFSPSSSSISATTLFRAPNAHSASFHRQSTAESSLHQQLPNVRQRLIQHLAEHGIKPARSMAEHIPPAPNWPAPPPPVQNEQSRPLPDVAQRLVQHLAEHGIQPARNMAEHIPPAPNWPAPPLPVQNEQSRPLPDVAQRLVQHLAEHGIQPARSMAEHIPPAPNWPAPPPPVQNEQSRPLPDVAQRLMQHLAEHGIQPARNMAEHIPPAPNWPAPTPPVQNEQSRPLPDVAQRLMQHLAEHGIQPARNMAEHIPPAPNWPAPTPPVQNEQSRPLPDVAQRLMQHLAEHGINTSKRS</sequence>
<organism>
    <name type="scientific">Escherichia coli O157:H7</name>
    <dbReference type="NCBI Taxonomy" id="83334"/>
    <lineage>
        <taxon>Bacteria</taxon>
        <taxon>Pseudomonadati</taxon>
        <taxon>Pseudomonadota</taxon>
        <taxon>Gammaproteobacteria</taxon>
        <taxon>Enterobacterales</taxon>
        <taxon>Enterobacteriaceae</taxon>
        <taxon>Escherichia</taxon>
    </lineage>
</organism>
<name>ESFU3_ECO57</name>
<proteinExistence type="evidence at protein level"/>
<accession>P0DJ89</accession>
<accession>Q8X2D5</accession>